<reference key="1">
    <citation type="journal article" date="1999" name="Science">
        <title>Genome sequence of the radioresistant bacterium Deinococcus radiodurans R1.</title>
        <authorList>
            <person name="White O."/>
            <person name="Eisen J.A."/>
            <person name="Heidelberg J.F."/>
            <person name="Hickey E.K."/>
            <person name="Peterson J.D."/>
            <person name="Dodson R.J."/>
            <person name="Haft D.H."/>
            <person name="Gwinn M.L."/>
            <person name="Nelson W.C."/>
            <person name="Richardson D.L."/>
            <person name="Moffat K.S."/>
            <person name="Qin H."/>
            <person name="Jiang L."/>
            <person name="Pamphile W."/>
            <person name="Crosby M."/>
            <person name="Shen M."/>
            <person name="Vamathevan J.J."/>
            <person name="Lam P."/>
            <person name="McDonald L.A."/>
            <person name="Utterback T.R."/>
            <person name="Zalewski C."/>
            <person name="Makarova K.S."/>
            <person name="Aravind L."/>
            <person name="Daly M.J."/>
            <person name="Minton K.W."/>
            <person name="Fleischmann R.D."/>
            <person name="Ketchum K.A."/>
            <person name="Nelson K.E."/>
            <person name="Salzberg S.L."/>
            <person name="Smith H.O."/>
            <person name="Venter J.C."/>
            <person name="Fraser C.M."/>
        </authorList>
    </citation>
    <scope>NUCLEOTIDE SEQUENCE [LARGE SCALE GENOMIC DNA]</scope>
    <source>
        <strain>ATCC 13939 / DSM 20539 / JCM 16871 / CCUG 27074 / LMG 4051 / NBRC 15346 / NCIMB 9279 / VKM B-1422 / R1</strain>
    </source>
</reference>
<feature type="chain" id="PRO_0000161114" description="Elongation factor Ts">
    <location>
        <begin position="1"/>
        <end position="264"/>
    </location>
</feature>
<feature type="region of interest" description="Involved in Mg(2+) ion dislocation from EF-Tu" evidence="1">
    <location>
        <begin position="76"/>
        <end position="79"/>
    </location>
</feature>
<organism>
    <name type="scientific">Deinococcus radiodurans (strain ATCC 13939 / DSM 20539 / JCM 16871 / CCUG 27074 / LMG 4051 / NBRC 15346 / NCIMB 9279 / VKM B-1422 / R1)</name>
    <dbReference type="NCBI Taxonomy" id="243230"/>
    <lineage>
        <taxon>Bacteria</taxon>
        <taxon>Thermotogati</taxon>
        <taxon>Deinococcota</taxon>
        <taxon>Deinococci</taxon>
        <taxon>Deinococcales</taxon>
        <taxon>Deinococcaceae</taxon>
        <taxon>Deinococcus</taxon>
    </lineage>
</organism>
<proteinExistence type="inferred from homology"/>
<keyword id="KW-0963">Cytoplasm</keyword>
<keyword id="KW-0251">Elongation factor</keyword>
<keyword id="KW-0648">Protein biosynthesis</keyword>
<keyword id="KW-1185">Reference proteome</keyword>
<gene>
    <name evidence="1" type="primary">tsf</name>
    <name type="ordered locus">DR_1512</name>
</gene>
<protein>
    <recommendedName>
        <fullName evidence="1">Elongation factor Ts</fullName>
        <shortName evidence="1">EF-Ts</shortName>
    </recommendedName>
</protein>
<dbReference type="EMBL" id="AE000513">
    <property type="protein sequence ID" value="AAF11079.1"/>
    <property type="molecule type" value="Genomic_DNA"/>
</dbReference>
<dbReference type="PIR" id="E75386">
    <property type="entry name" value="E75386"/>
</dbReference>
<dbReference type="RefSeq" id="NP_295235.1">
    <property type="nucleotide sequence ID" value="NC_001263.1"/>
</dbReference>
<dbReference type="RefSeq" id="WP_010888151.1">
    <property type="nucleotide sequence ID" value="NC_001263.1"/>
</dbReference>
<dbReference type="SMR" id="Q9RU80"/>
<dbReference type="FunCoup" id="Q9RU80">
    <property type="interactions" value="466"/>
</dbReference>
<dbReference type="STRING" id="243230.DR_1512"/>
<dbReference type="PaxDb" id="243230-DR_1512"/>
<dbReference type="EnsemblBacteria" id="AAF11079">
    <property type="protein sequence ID" value="AAF11079"/>
    <property type="gene ID" value="DR_1512"/>
</dbReference>
<dbReference type="GeneID" id="69517751"/>
<dbReference type="KEGG" id="dra:DR_1512"/>
<dbReference type="PATRIC" id="fig|243230.17.peg.1715"/>
<dbReference type="eggNOG" id="COG0264">
    <property type="taxonomic scope" value="Bacteria"/>
</dbReference>
<dbReference type="HOGENOM" id="CLU_047155_0_2_0"/>
<dbReference type="InParanoid" id="Q9RU80"/>
<dbReference type="OrthoDB" id="9808348at2"/>
<dbReference type="Proteomes" id="UP000002524">
    <property type="component" value="Chromosome 1"/>
</dbReference>
<dbReference type="GO" id="GO:0005737">
    <property type="term" value="C:cytoplasm"/>
    <property type="evidence" value="ECO:0007669"/>
    <property type="project" value="UniProtKB-SubCell"/>
</dbReference>
<dbReference type="GO" id="GO:0003746">
    <property type="term" value="F:translation elongation factor activity"/>
    <property type="evidence" value="ECO:0000318"/>
    <property type="project" value="GO_Central"/>
</dbReference>
<dbReference type="GO" id="GO:0006414">
    <property type="term" value="P:translational elongation"/>
    <property type="evidence" value="ECO:0000318"/>
    <property type="project" value="GO_Central"/>
</dbReference>
<dbReference type="CDD" id="cd14275">
    <property type="entry name" value="UBA_EF-Ts"/>
    <property type="match status" value="1"/>
</dbReference>
<dbReference type="FunFam" id="1.10.286.20:FF:000001">
    <property type="entry name" value="Elongation factor Ts"/>
    <property type="match status" value="1"/>
</dbReference>
<dbReference type="FunFam" id="1.10.8.10:FF:000001">
    <property type="entry name" value="Elongation factor Ts"/>
    <property type="match status" value="1"/>
</dbReference>
<dbReference type="Gene3D" id="1.10.286.20">
    <property type="match status" value="1"/>
</dbReference>
<dbReference type="Gene3D" id="1.10.8.10">
    <property type="entry name" value="DNA helicase RuvA subunit, C-terminal domain"/>
    <property type="match status" value="1"/>
</dbReference>
<dbReference type="Gene3D" id="3.30.479.20">
    <property type="entry name" value="Elongation factor Ts, dimerisation domain"/>
    <property type="match status" value="2"/>
</dbReference>
<dbReference type="HAMAP" id="MF_00050">
    <property type="entry name" value="EF_Ts"/>
    <property type="match status" value="1"/>
</dbReference>
<dbReference type="InterPro" id="IPR036402">
    <property type="entry name" value="EF-Ts_dimer_sf"/>
</dbReference>
<dbReference type="InterPro" id="IPR001816">
    <property type="entry name" value="Transl_elong_EFTs/EF1B"/>
</dbReference>
<dbReference type="InterPro" id="IPR014039">
    <property type="entry name" value="Transl_elong_EFTs/EF1B_dimer"/>
</dbReference>
<dbReference type="InterPro" id="IPR018101">
    <property type="entry name" value="Transl_elong_Ts_CS"/>
</dbReference>
<dbReference type="InterPro" id="IPR009060">
    <property type="entry name" value="UBA-like_sf"/>
</dbReference>
<dbReference type="NCBIfam" id="TIGR00116">
    <property type="entry name" value="tsf"/>
    <property type="match status" value="1"/>
</dbReference>
<dbReference type="PANTHER" id="PTHR11741">
    <property type="entry name" value="ELONGATION FACTOR TS"/>
    <property type="match status" value="1"/>
</dbReference>
<dbReference type="PANTHER" id="PTHR11741:SF0">
    <property type="entry name" value="ELONGATION FACTOR TS, MITOCHONDRIAL"/>
    <property type="match status" value="1"/>
</dbReference>
<dbReference type="Pfam" id="PF00889">
    <property type="entry name" value="EF_TS"/>
    <property type="match status" value="1"/>
</dbReference>
<dbReference type="SUPFAM" id="SSF54713">
    <property type="entry name" value="Elongation factor Ts (EF-Ts), dimerisation domain"/>
    <property type="match status" value="1"/>
</dbReference>
<dbReference type="SUPFAM" id="SSF46934">
    <property type="entry name" value="UBA-like"/>
    <property type="match status" value="1"/>
</dbReference>
<dbReference type="PROSITE" id="PS01126">
    <property type="entry name" value="EF_TS_1"/>
    <property type="match status" value="1"/>
</dbReference>
<dbReference type="PROSITE" id="PS01127">
    <property type="entry name" value="EF_TS_2"/>
    <property type="match status" value="1"/>
</dbReference>
<name>EFTS_DEIRA</name>
<comment type="function">
    <text evidence="1">Associates with the EF-Tu.GDP complex and induces the exchange of GDP to GTP. It remains bound to the aminoacyl-tRNA.EF-Tu.GTP complex up to the GTP hydrolysis stage on the ribosome.</text>
</comment>
<comment type="subcellular location">
    <subcellularLocation>
        <location evidence="1">Cytoplasm</location>
    </subcellularLocation>
</comment>
<comment type="similarity">
    <text evidence="1">Belongs to the EF-Ts family.</text>
</comment>
<evidence type="ECO:0000255" key="1">
    <source>
        <dbReference type="HAMAP-Rule" id="MF_00050"/>
    </source>
</evidence>
<sequence length="264" mass="28688">MMESIKKLREMTGAGMMDVKKALADAEGNEDKAIALLRERGIAKAVKKGDREAKEGIVRFAVDGNRAAMVEVNSETDFVARNADFQATVEKLAQAALQAKTNDVEEFKNFTVDGETVGNMVAATAGKIGENIVLNRVAYLEGQQVAGYVHSNGKIGVLVDLAGGDEAKAKDVALHVAAERPQFLTRDEVESGDIEKEREILTNKALAEGKPQQIVEKIVEGQIGKFYQERVLPEQTFVKDNSLTVAKYLGDASVNKFVRFEIGA</sequence>
<accession>Q9RU80</accession>